<proteinExistence type="inferred from homology"/>
<organism>
    <name type="scientific">Polynucleobacter necessarius subsp. necessarius (strain STIR1)</name>
    <dbReference type="NCBI Taxonomy" id="452638"/>
    <lineage>
        <taxon>Bacteria</taxon>
        <taxon>Pseudomonadati</taxon>
        <taxon>Pseudomonadota</taxon>
        <taxon>Betaproteobacteria</taxon>
        <taxon>Burkholderiales</taxon>
        <taxon>Burkholderiaceae</taxon>
        <taxon>Polynucleobacter</taxon>
    </lineage>
</organism>
<keyword id="KW-0687">Ribonucleoprotein</keyword>
<keyword id="KW-0689">Ribosomal protein</keyword>
<evidence type="ECO:0000255" key="1">
    <source>
        <dbReference type="HAMAP-Rule" id="MF_00291"/>
    </source>
</evidence>
<evidence type="ECO:0000305" key="2"/>
<sequence>MSVTMRQMLEAGCHFGHQTRFWSPKMAPFIFGHRNKIHIINLEKTLPMFQDALKFTKQVAANRGTILFVGTKRQSREIIAEEAARAGMPYIDSRWLGGTLTNFKTVKGSLKRLKDMEVAKEAGDWEKLSRKEALTNDRDLDKLQKALGGIKDLNGIPDAIFVVDVGYHKIAITEANKLGIPVIAVVDTNHSPEGVDYIIPGNDDSSKAVILYAHGIANAILEGKANSVQEILTAVKEGEEEFVEEGKVE</sequence>
<reference key="1">
    <citation type="journal article" date="2013" name="Proc. Natl. Acad. Sci. U.S.A.">
        <title>Polynucleobacter necessarius, a model for genome reduction in both free-living and symbiotic bacteria.</title>
        <authorList>
            <person name="Boscaro V."/>
            <person name="Felletti M."/>
            <person name="Vannini C."/>
            <person name="Ackerman M.S."/>
            <person name="Chain P.S."/>
            <person name="Malfatti S."/>
            <person name="Vergez L.M."/>
            <person name="Shin M."/>
            <person name="Doak T.G."/>
            <person name="Lynch M."/>
            <person name="Petroni G."/>
        </authorList>
    </citation>
    <scope>NUCLEOTIDE SEQUENCE [LARGE SCALE GENOMIC DNA]</scope>
    <source>
        <strain>STIR1</strain>
    </source>
</reference>
<gene>
    <name evidence="1" type="primary">rpsB</name>
    <name type="ordered locus">Pnec_0507</name>
</gene>
<comment type="similarity">
    <text evidence="1">Belongs to the universal ribosomal protein uS2 family.</text>
</comment>
<feature type="chain" id="PRO_1000115040" description="Small ribosomal subunit protein uS2">
    <location>
        <begin position="1"/>
        <end position="249"/>
    </location>
</feature>
<accession>B1XTU3</accession>
<name>RS2_POLNS</name>
<dbReference type="EMBL" id="CP001010">
    <property type="protein sequence ID" value="ACB43770.1"/>
    <property type="molecule type" value="Genomic_DNA"/>
</dbReference>
<dbReference type="SMR" id="B1XTU3"/>
<dbReference type="STRING" id="452638.Pnec_0507"/>
<dbReference type="KEGG" id="pne:Pnec_0507"/>
<dbReference type="eggNOG" id="COG0052">
    <property type="taxonomic scope" value="Bacteria"/>
</dbReference>
<dbReference type="HOGENOM" id="CLU_040318_1_2_4"/>
<dbReference type="OrthoDB" id="9808036at2"/>
<dbReference type="GO" id="GO:0022627">
    <property type="term" value="C:cytosolic small ribosomal subunit"/>
    <property type="evidence" value="ECO:0007669"/>
    <property type="project" value="TreeGrafter"/>
</dbReference>
<dbReference type="GO" id="GO:0003735">
    <property type="term" value="F:structural constituent of ribosome"/>
    <property type="evidence" value="ECO:0007669"/>
    <property type="project" value="InterPro"/>
</dbReference>
<dbReference type="GO" id="GO:0006412">
    <property type="term" value="P:translation"/>
    <property type="evidence" value="ECO:0007669"/>
    <property type="project" value="UniProtKB-UniRule"/>
</dbReference>
<dbReference type="CDD" id="cd01425">
    <property type="entry name" value="RPS2"/>
    <property type="match status" value="1"/>
</dbReference>
<dbReference type="Gene3D" id="3.40.50.10490">
    <property type="entry name" value="Glucose-6-phosphate isomerase like protein, domain 1"/>
    <property type="match status" value="1"/>
</dbReference>
<dbReference type="Gene3D" id="1.10.287.610">
    <property type="entry name" value="Helix hairpin bin"/>
    <property type="match status" value="1"/>
</dbReference>
<dbReference type="HAMAP" id="MF_00291_B">
    <property type="entry name" value="Ribosomal_uS2_B"/>
    <property type="match status" value="1"/>
</dbReference>
<dbReference type="InterPro" id="IPR001865">
    <property type="entry name" value="Ribosomal_uS2"/>
</dbReference>
<dbReference type="InterPro" id="IPR005706">
    <property type="entry name" value="Ribosomal_uS2_bac/mit/plastid"/>
</dbReference>
<dbReference type="InterPro" id="IPR023591">
    <property type="entry name" value="Ribosomal_uS2_flav_dom_sf"/>
</dbReference>
<dbReference type="NCBIfam" id="TIGR01011">
    <property type="entry name" value="rpsB_bact"/>
    <property type="match status" value="1"/>
</dbReference>
<dbReference type="PANTHER" id="PTHR12534">
    <property type="entry name" value="30S RIBOSOMAL PROTEIN S2 PROKARYOTIC AND ORGANELLAR"/>
    <property type="match status" value="1"/>
</dbReference>
<dbReference type="PANTHER" id="PTHR12534:SF0">
    <property type="entry name" value="SMALL RIBOSOMAL SUBUNIT PROTEIN US2M"/>
    <property type="match status" value="1"/>
</dbReference>
<dbReference type="Pfam" id="PF00318">
    <property type="entry name" value="Ribosomal_S2"/>
    <property type="match status" value="1"/>
</dbReference>
<dbReference type="PRINTS" id="PR00395">
    <property type="entry name" value="RIBOSOMALS2"/>
</dbReference>
<dbReference type="SUPFAM" id="SSF52313">
    <property type="entry name" value="Ribosomal protein S2"/>
    <property type="match status" value="1"/>
</dbReference>
<protein>
    <recommendedName>
        <fullName evidence="1">Small ribosomal subunit protein uS2</fullName>
    </recommendedName>
    <alternativeName>
        <fullName evidence="2">30S ribosomal protein S2</fullName>
    </alternativeName>
</protein>